<dbReference type="EC" id="2.7.1.148" evidence="1"/>
<dbReference type="EMBL" id="AE017321">
    <property type="protein sequence ID" value="AAW70764.1"/>
    <property type="molecule type" value="Genomic_DNA"/>
</dbReference>
<dbReference type="RefSeq" id="WP_011256374.1">
    <property type="nucleotide sequence ID" value="NC_006833.1"/>
</dbReference>
<dbReference type="SMR" id="Q5GTB0"/>
<dbReference type="STRING" id="292805.Wbm0173"/>
<dbReference type="KEGG" id="wbm:Wbm0173"/>
<dbReference type="eggNOG" id="COG1947">
    <property type="taxonomic scope" value="Bacteria"/>
</dbReference>
<dbReference type="HOGENOM" id="CLU_053057_1_0_5"/>
<dbReference type="UniPathway" id="UPA00056">
    <property type="reaction ID" value="UER00094"/>
</dbReference>
<dbReference type="Proteomes" id="UP000000534">
    <property type="component" value="Chromosome"/>
</dbReference>
<dbReference type="GO" id="GO:0050515">
    <property type="term" value="F:4-(cytidine 5'-diphospho)-2-C-methyl-D-erythritol kinase activity"/>
    <property type="evidence" value="ECO:0007669"/>
    <property type="project" value="UniProtKB-UniRule"/>
</dbReference>
<dbReference type="GO" id="GO:0005524">
    <property type="term" value="F:ATP binding"/>
    <property type="evidence" value="ECO:0007669"/>
    <property type="project" value="UniProtKB-UniRule"/>
</dbReference>
<dbReference type="GO" id="GO:0019288">
    <property type="term" value="P:isopentenyl diphosphate biosynthetic process, methylerythritol 4-phosphate pathway"/>
    <property type="evidence" value="ECO:0007669"/>
    <property type="project" value="UniProtKB-UniRule"/>
</dbReference>
<dbReference type="GO" id="GO:0016114">
    <property type="term" value="P:terpenoid biosynthetic process"/>
    <property type="evidence" value="ECO:0007669"/>
    <property type="project" value="InterPro"/>
</dbReference>
<dbReference type="Gene3D" id="3.30.230.10">
    <property type="match status" value="1"/>
</dbReference>
<dbReference type="Gene3D" id="3.30.70.890">
    <property type="entry name" value="GHMP kinase, C-terminal domain"/>
    <property type="match status" value="1"/>
</dbReference>
<dbReference type="HAMAP" id="MF_00061">
    <property type="entry name" value="IspE"/>
    <property type="match status" value="1"/>
</dbReference>
<dbReference type="InterPro" id="IPR013750">
    <property type="entry name" value="GHMP_kinase_C_dom"/>
</dbReference>
<dbReference type="InterPro" id="IPR036554">
    <property type="entry name" value="GHMP_kinase_C_sf"/>
</dbReference>
<dbReference type="InterPro" id="IPR006204">
    <property type="entry name" value="GHMP_kinase_N_dom"/>
</dbReference>
<dbReference type="InterPro" id="IPR004424">
    <property type="entry name" value="IspE"/>
</dbReference>
<dbReference type="InterPro" id="IPR020568">
    <property type="entry name" value="Ribosomal_Su5_D2-typ_SF"/>
</dbReference>
<dbReference type="InterPro" id="IPR014721">
    <property type="entry name" value="Ribsml_uS5_D2-typ_fold_subgr"/>
</dbReference>
<dbReference type="NCBIfam" id="TIGR00154">
    <property type="entry name" value="ispE"/>
    <property type="match status" value="1"/>
</dbReference>
<dbReference type="NCBIfam" id="NF011202">
    <property type="entry name" value="PRK14608.1"/>
    <property type="match status" value="1"/>
</dbReference>
<dbReference type="PANTHER" id="PTHR43527">
    <property type="entry name" value="4-DIPHOSPHOCYTIDYL-2-C-METHYL-D-ERYTHRITOL KINASE, CHLOROPLASTIC"/>
    <property type="match status" value="1"/>
</dbReference>
<dbReference type="PANTHER" id="PTHR43527:SF2">
    <property type="entry name" value="4-DIPHOSPHOCYTIDYL-2-C-METHYL-D-ERYTHRITOL KINASE, CHLOROPLASTIC"/>
    <property type="match status" value="1"/>
</dbReference>
<dbReference type="Pfam" id="PF08544">
    <property type="entry name" value="GHMP_kinases_C"/>
    <property type="match status" value="1"/>
</dbReference>
<dbReference type="Pfam" id="PF00288">
    <property type="entry name" value="GHMP_kinases_N"/>
    <property type="match status" value="1"/>
</dbReference>
<dbReference type="PIRSF" id="PIRSF010376">
    <property type="entry name" value="IspE"/>
    <property type="match status" value="1"/>
</dbReference>
<dbReference type="SUPFAM" id="SSF55060">
    <property type="entry name" value="GHMP Kinase, C-terminal domain"/>
    <property type="match status" value="1"/>
</dbReference>
<dbReference type="SUPFAM" id="SSF54211">
    <property type="entry name" value="Ribosomal protein S5 domain 2-like"/>
    <property type="match status" value="1"/>
</dbReference>
<evidence type="ECO:0000255" key="1">
    <source>
        <dbReference type="HAMAP-Rule" id="MF_00061"/>
    </source>
</evidence>
<comment type="function">
    <text evidence="1">Catalyzes the phosphorylation of the position 2 hydroxy group of 4-diphosphocytidyl-2C-methyl-D-erythritol.</text>
</comment>
<comment type="catalytic activity">
    <reaction evidence="1">
        <text>4-CDP-2-C-methyl-D-erythritol + ATP = 4-CDP-2-C-methyl-D-erythritol 2-phosphate + ADP + H(+)</text>
        <dbReference type="Rhea" id="RHEA:18437"/>
        <dbReference type="ChEBI" id="CHEBI:15378"/>
        <dbReference type="ChEBI" id="CHEBI:30616"/>
        <dbReference type="ChEBI" id="CHEBI:57823"/>
        <dbReference type="ChEBI" id="CHEBI:57919"/>
        <dbReference type="ChEBI" id="CHEBI:456216"/>
        <dbReference type="EC" id="2.7.1.148"/>
    </reaction>
</comment>
<comment type="pathway">
    <text evidence="1">Isoprenoid biosynthesis; isopentenyl diphosphate biosynthesis via DXP pathway; isopentenyl diphosphate from 1-deoxy-D-xylulose 5-phosphate: step 3/6.</text>
</comment>
<comment type="similarity">
    <text evidence="1">Belongs to the GHMP kinase family. IspE subfamily.</text>
</comment>
<feature type="chain" id="PRO_0000235152" description="4-diphosphocytidyl-2-C-methyl-D-erythritol kinase">
    <location>
        <begin position="1"/>
        <end position="288"/>
    </location>
</feature>
<feature type="active site" evidence="1">
    <location>
        <position position="11"/>
    </location>
</feature>
<feature type="active site" evidence="1">
    <location>
        <position position="140"/>
    </location>
</feature>
<feature type="binding site" evidence="1">
    <location>
        <begin position="100"/>
        <end position="110"/>
    </location>
    <ligand>
        <name>ATP</name>
        <dbReference type="ChEBI" id="CHEBI:30616"/>
    </ligand>
</feature>
<proteinExistence type="inferred from homology"/>
<gene>
    <name evidence="1" type="primary">ispE</name>
    <name type="ordered locus">Wbm0173</name>
</gene>
<organism>
    <name type="scientific">Wolbachia sp. subsp. Brugia malayi (strain TRS)</name>
    <dbReference type="NCBI Taxonomy" id="292805"/>
    <lineage>
        <taxon>Bacteria</taxon>
        <taxon>Pseudomonadati</taxon>
        <taxon>Pseudomonadota</taxon>
        <taxon>Alphaproteobacteria</taxon>
        <taxon>Rickettsiales</taxon>
        <taxon>Anaplasmataceae</taxon>
        <taxon>Wolbachieae</taxon>
        <taxon>Wolbachia</taxon>
    </lineage>
</organism>
<reference key="1">
    <citation type="journal article" date="2005" name="PLoS Biol.">
        <title>The Wolbachia genome of Brugia malayi: endosymbiont evolution within a human pathogenic nematode.</title>
        <authorList>
            <person name="Foster J."/>
            <person name="Ganatra M."/>
            <person name="Kamal I."/>
            <person name="Ware J."/>
            <person name="Makarova K."/>
            <person name="Ivanova N."/>
            <person name="Bhattacharyya A."/>
            <person name="Kapatral V."/>
            <person name="Kumar S."/>
            <person name="Posfai J."/>
            <person name="Vincze T."/>
            <person name="Ingram J."/>
            <person name="Moran L."/>
            <person name="Lapidus A."/>
            <person name="Omelchenko M."/>
            <person name="Kyrpides N."/>
            <person name="Ghedin E."/>
            <person name="Wang S."/>
            <person name="Goltsman E."/>
            <person name="Joukov V."/>
            <person name="Ostrovskaya O."/>
            <person name="Tsukerman K."/>
            <person name="Mazur M."/>
            <person name="Comb D."/>
            <person name="Koonin E."/>
            <person name="Slatko B."/>
        </authorList>
    </citation>
    <scope>NUCLEOTIDE SEQUENCE [LARGE SCALE GENOMIC DNA]</scope>
    <source>
        <strain>TRS</strain>
    </source>
</reference>
<accession>Q5GTB0</accession>
<protein>
    <recommendedName>
        <fullName evidence="1">4-diphosphocytidyl-2-C-methyl-D-erythritol kinase</fullName>
        <shortName evidence="1">CMK</shortName>
        <ecNumber evidence="1">2.7.1.148</ecNumber>
    </recommendedName>
    <alternativeName>
        <fullName evidence="1">4-(cytidine-5'-diphospho)-2-C-methyl-D-erythritol kinase</fullName>
    </alternativeName>
</protein>
<name>ISPE_WOLTR</name>
<sequence length="288" mass="32007">MKSFCVKAPAKINLFLHVVEKKETGYHLIEGLFVFANLSNFLEIKVGEKDFRYDNPIVEFVNSELKISNKYNTVMRAVNLLLRHAPVRTKVTVKVVKNIPTSAGLGSGSSDAGAVIRTLGKLWKIDRPILNEIALSVGADVPASIDSKPVLVRGIGEELCYINKFSLPTNIVLAKPKKKFLSTPEVFSKYGGNFSKPIEWRDDTEKDLLKLLKETENDLQEIAISLVPEIRDVILALESQEGSILSRMSGSGVTCFGIFDSEENAKTAAVNIREKQPEWWVCDAQLIV</sequence>
<keyword id="KW-0067">ATP-binding</keyword>
<keyword id="KW-0414">Isoprene biosynthesis</keyword>
<keyword id="KW-0418">Kinase</keyword>
<keyword id="KW-0547">Nucleotide-binding</keyword>
<keyword id="KW-1185">Reference proteome</keyword>
<keyword id="KW-0808">Transferase</keyword>